<feature type="chain" id="PRO_0000263358" description="Peptide chain release factor 1">
    <location>
        <begin position="1"/>
        <end position="358"/>
    </location>
</feature>
<feature type="modified residue" description="N5-methylglutamine" evidence="1">
    <location>
        <position position="233"/>
    </location>
</feature>
<comment type="function">
    <text evidence="1">Peptide chain release factor 1 directs the termination of translation in response to the peptide chain termination codons UAG and UAA.</text>
</comment>
<comment type="subcellular location">
    <subcellularLocation>
        <location evidence="1">Cytoplasm</location>
    </subcellularLocation>
</comment>
<comment type="PTM">
    <text evidence="1">Methylated by PrmC. Methylation increases the termination efficiency of RF1.</text>
</comment>
<comment type="similarity">
    <text evidence="1">Belongs to the prokaryotic/mitochondrial release factor family.</text>
</comment>
<organism>
    <name type="scientific">Staphylococcus aureus (strain bovine RF122 / ET3-1)</name>
    <dbReference type="NCBI Taxonomy" id="273036"/>
    <lineage>
        <taxon>Bacteria</taxon>
        <taxon>Bacillati</taxon>
        <taxon>Bacillota</taxon>
        <taxon>Bacilli</taxon>
        <taxon>Bacillales</taxon>
        <taxon>Staphylococcaceae</taxon>
        <taxon>Staphylococcus</taxon>
    </lineage>
</organism>
<gene>
    <name evidence="1" type="primary">prfA</name>
    <name type="ordered locus">SAB2002c</name>
</gene>
<proteinExistence type="inferred from homology"/>
<name>RF1_STAAB</name>
<evidence type="ECO:0000255" key="1">
    <source>
        <dbReference type="HAMAP-Rule" id="MF_00093"/>
    </source>
</evidence>
<reference key="1">
    <citation type="journal article" date="2007" name="PLoS ONE">
        <title>Molecular correlates of host specialization in Staphylococcus aureus.</title>
        <authorList>
            <person name="Herron-Olson L."/>
            <person name="Fitzgerald J.R."/>
            <person name="Musser J.M."/>
            <person name="Kapur V."/>
        </authorList>
    </citation>
    <scope>NUCLEOTIDE SEQUENCE [LARGE SCALE GENOMIC DNA]</scope>
    <source>
        <strain>bovine RF122 / ET3-1</strain>
    </source>
</reference>
<dbReference type="EMBL" id="AJ938182">
    <property type="protein sequence ID" value="CAI81691.1"/>
    <property type="molecule type" value="Genomic_DNA"/>
</dbReference>
<dbReference type="RefSeq" id="WP_000460244.1">
    <property type="nucleotide sequence ID" value="NC_007622.1"/>
</dbReference>
<dbReference type="SMR" id="Q2YUN5"/>
<dbReference type="KEGG" id="sab:SAB2002c"/>
<dbReference type="HOGENOM" id="CLU_036856_0_1_9"/>
<dbReference type="GO" id="GO:0005737">
    <property type="term" value="C:cytoplasm"/>
    <property type="evidence" value="ECO:0007669"/>
    <property type="project" value="UniProtKB-SubCell"/>
</dbReference>
<dbReference type="GO" id="GO:0016149">
    <property type="term" value="F:translation release factor activity, codon specific"/>
    <property type="evidence" value="ECO:0007669"/>
    <property type="project" value="UniProtKB-UniRule"/>
</dbReference>
<dbReference type="FunFam" id="3.30.160.20:FF:000004">
    <property type="entry name" value="Peptide chain release factor 1"/>
    <property type="match status" value="1"/>
</dbReference>
<dbReference type="FunFam" id="3.30.70.1660:FF:000002">
    <property type="entry name" value="Peptide chain release factor 1"/>
    <property type="match status" value="1"/>
</dbReference>
<dbReference type="FunFam" id="3.30.70.1660:FF:000004">
    <property type="entry name" value="Peptide chain release factor 1"/>
    <property type="match status" value="1"/>
</dbReference>
<dbReference type="Gene3D" id="3.30.160.20">
    <property type="match status" value="1"/>
</dbReference>
<dbReference type="Gene3D" id="3.30.70.1660">
    <property type="match status" value="1"/>
</dbReference>
<dbReference type="Gene3D" id="6.10.140.1950">
    <property type="match status" value="1"/>
</dbReference>
<dbReference type="HAMAP" id="MF_00093">
    <property type="entry name" value="Rel_fac_1"/>
    <property type="match status" value="1"/>
</dbReference>
<dbReference type="InterPro" id="IPR005139">
    <property type="entry name" value="PCRF"/>
</dbReference>
<dbReference type="InterPro" id="IPR000352">
    <property type="entry name" value="Pep_chain_release_fac_I"/>
</dbReference>
<dbReference type="InterPro" id="IPR045853">
    <property type="entry name" value="Pep_chain_release_fac_I_sf"/>
</dbReference>
<dbReference type="InterPro" id="IPR050057">
    <property type="entry name" value="Prokaryotic/Mito_RF"/>
</dbReference>
<dbReference type="InterPro" id="IPR004373">
    <property type="entry name" value="RF-1"/>
</dbReference>
<dbReference type="NCBIfam" id="TIGR00019">
    <property type="entry name" value="prfA"/>
    <property type="match status" value="1"/>
</dbReference>
<dbReference type="NCBIfam" id="NF001859">
    <property type="entry name" value="PRK00591.1"/>
    <property type="match status" value="1"/>
</dbReference>
<dbReference type="PANTHER" id="PTHR43804">
    <property type="entry name" value="LD18447P"/>
    <property type="match status" value="1"/>
</dbReference>
<dbReference type="PANTHER" id="PTHR43804:SF7">
    <property type="entry name" value="LD18447P"/>
    <property type="match status" value="1"/>
</dbReference>
<dbReference type="Pfam" id="PF03462">
    <property type="entry name" value="PCRF"/>
    <property type="match status" value="1"/>
</dbReference>
<dbReference type="Pfam" id="PF00472">
    <property type="entry name" value="RF-1"/>
    <property type="match status" value="1"/>
</dbReference>
<dbReference type="SMART" id="SM00937">
    <property type="entry name" value="PCRF"/>
    <property type="match status" value="1"/>
</dbReference>
<dbReference type="SUPFAM" id="SSF75620">
    <property type="entry name" value="Release factor"/>
    <property type="match status" value="1"/>
</dbReference>
<dbReference type="PROSITE" id="PS00745">
    <property type="entry name" value="RF_PROK_I"/>
    <property type="match status" value="1"/>
</dbReference>
<protein>
    <recommendedName>
        <fullName evidence="1">Peptide chain release factor 1</fullName>
        <shortName evidence="1">RF-1</shortName>
    </recommendedName>
</protein>
<sequence length="358" mass="40323">MFDQLDIVEERYEQLNELLSDPDVVNDSDKLRKYSKEQADLQKTVDVYRNYKAKKEELADIEEMLSETDDKEEVEMLKEESSGIKAELPNLEEELKILLIPKDPNDDKDVIVEIRAAAGGDEAAIFAGDLMRMYSKYAESQGFKTEIVEASESDHGGYKEISFSVSGNGAYSKLKFENGAHRVQRVPETESGGRIHTSTATVAVLPEVEDVEIEIRNEDLKIDTYRSSGAGGQHVNTTDSAVRITHLPTGVIATSSEKSQIQNREKAMKVLKARLYDMKVQEEQQKYASQRKSAVGTGDRSERIRTYNYPQSRVTDHRIGLTLQKLGQIMEGHLEEIIDALTLSEQTDKLKELNNGEL</sequence>
<accession>Q2YUN5</accession>
<keyword id="KW-0963">Cytoplasm</keyword>
<keyword id="KW-0488">Methylation</keyword>
<keyword id="KW-0648">Protein biosynthesis</keyword>